<name>KPCZ_RABIT</name>
<reference key="1">
    <citation type="journal article" date="1997" name="Kidney Int.">
        <title>Intrarenal distribution of rabbit PKC zeta.</title>
        <authorList>
            <person name="Hao C.-M."/>
            <person name="Breyer R.M."/>
            <person name="Davis L.S."/>
            <person name="Breyer M.D."/>
        </authorList>
    </citation>
    <scope>NUCLEOTIDE SEQUENCE [MRNA]</scope>
    <source>
        <strain>New Zealand white</strain>
        <tissue>Kidney</tissue>
    </source>
</reference>
<evidence type="ECO:0000250" key="1"/>
<evidence type="ECO:0000250" key="2">
    <source>
        <dbReference type="UniProtKB" id="P09217"/>
    </source>
</evidence>
<evidence type="ECO:0000250" key="3">
    <source>
        <dbReference type="UniProtKB" id="Q05513"/>
    </source>
</evidence>
<evidence type="ECO:0000255" key="4">
    <source>
        <dbReference type="PROSITE-ProRule" id="PRU00159"/>
    </source>
</evidence>
<evidence type="ECO:0000255" key="5">
    <source>
        <dbReference type="PROSITE-ProRule" id="PRU00226"/>
    </source>
</evidence>
<evidence type="ECO:0000255" key="6">
    <source>
        <dbReference type="PROSITE-ProRule" id="PRU00618"/>
    </source>
</evidence>
<evidence type="ECO:0000255" key="7">
    <source>
        <dbReference type="PROSITE-ProRule" id="PRU01081"/>
    </source>
</evidence>
<evidence type="ECO:0000255" key="8">
    <source>
        <dbReference type="PROSITE-ProRule" id="PRU10027"/>
    </source>
</evidence>
<evidence type="ECO:0000305" key="9"/>
<keyword id="KW-0067">ATP-binding</keyword>
<keyword id="KW-0965">Cell junction</keyword>
<keyword id="KW-0963">Cytoplasm</keyword>
<keyword id="KW-0967">Endosome</keyword>
<keyword id="KW-0395">Inflammatory response</keyword>
<keyword id="KW-0418">Kinase</keyword>
<keyword id="KW-0472">Membrane</keyword>
<keyword id="KW-0479">Metal-binding</keyword>
<keyword id="KW-0547">Nucleotide-binding</keyword>
<keyword id="KW-0597">Phosphoprotein</keyword>
<keyword id="KW-1185">Reference proteome</keyword>
<keyword id="KW-0723">Serine/threonine-protein kinase</keyword>
<keyword id="KW-0808">Transferase</keyword>
<keyword id="KW-0862">Zinc</keyword>
<keyword id="KW-0863">Zinc-finger</keyword>
<sequence length="591" mass="67095">MPSRAGPKMDGSGGRVRLKAHYSGDIFITSVDAATTFEELCEEVRDMCGLHQHHPLTLKWVDSEGDPRTVSSQMELGEAFRLAGQHRDDGLILHVFPSTPEQPGMPCPGEDKSIYRRGARRWRKLYRANGHLFQAKRFNRRAYCGQCSERIWGLARQGYRCINCKLLVHKRCHGLVPLTCRRHMDSVMPSQEPPVADKSDDADLPSQETDGIAFISTRKQDSGQEDAEDLKPVIDGVDGIKISQGLGLQDFDLIRVIGRGSYAKVLLVRLKKNGQVYAMKVVKKELVHDDEDIDWVQTEKHVFEQASGNPFLVGLHSCFQTTSRLFLVIEYVNGGDLMFHMQRQRKLPEEHARFYAAEICIALNFLHERGIIYRDLKLDNVLLDADGHIKLTDYGMCKEGLGPGDTTSTFCGTPNYIAPEILRGEEYGFSVDWWALGVLMFEMMAGRSPFDIITDNPDMNTEDYLFQVILEKPIRIPRFLSVKASHVLKGFLNKDPKERLGCRPQTGFSDIKSHAFFRSIDWDLLEKKQALPPFQPQITDDYGLDNSDTQFTSEPVQLTPDDEDVIKRIDQSEFEGFEYINPLLLSTEESV</sequence>
<proteinExistence type="evidence at transcript level"/>
<comment type="function">
    <text evidence="2 3">Calcium- and diacylglycerol-independent serine/threonine-protein kinase that functions in phosphatidylinositol 3-kinase (PI3K) pathway and mitogen-activated protein (MAP) kinase cascade, and is involved in NF-kappa-B activation, mitogenic signaling, cell proliferation, cell polarity, inflammatory response and maintenance of long-term potentiation (LTP). Upon lipopolysaccharide (LPS) treatment in macrophages, or following mitogenic stimuli, functions downstream of PI3K to activate MAP2K1/MEK1-MAPK1/ERK2 signaling cascade independently of RAF1 activation. Required for insulin-dependent activation of AKT3, but may function as an adapter rather than a direct activator. Upon insulin treatment may act as a downstream effector of PI3K and contribute to the activation of translocation of the glucose transporter SLC2A4/GLUT4 and subsequent glucose transport in adipocytes. In EGF-induced cells, binds and activates MAP2K5/MEK5-MAPK7/ERK5 independently of its kinase activity and can activate JUN promoter through MEF2C. Through binding with SQSTM1/p62, functions in interleukin-1 signaling and activation of NF-kappa-B with the specific adapters RIPK1 and TRAF6. Participates in TNF-dependent transactivation of NF-kappa-B by phosphorylating and activating IKBKB kinase, which in turn leads to the degradation of NF-kappa-B inhibitors. In migrating astrocytes, forms a cytoplasmic complex with PARD6A and is recruited by CDC42 to function in the establishment of cell polarity along with the microtubule motor and dynein. In association with FEZ1, stimulates neuronal differentiation in PC12 cells. In the inflammatory response, is required for the T-helper 2 (Th2) differentiation process, including interleukin production, efficient activation of JAK1 and the subsequent phosphorylation and nuclear translocation of STAT6. May be involved in development of allergic airway inflammation (asthma), a process dependent on Th2 immune response. In the NF-kappa-B-mediated inflammatory response, can relieve SETD6-dependent repression of NF-kappa-B target genes by phosphorylating the RELA subunit at 'Ser-311'. Phosphorylates VAMP2 in vitro (By similarity). Phosphorylates and activates LRRK1, which phosphorylates RAB proteins involved in intracellular trafficking (By similarity).</text>
</comment>
<comment type="catalytic activity">
    <reaction evidence="3">
        <text>L-seryl-[protein] + ATP = O-phospho-L-seryl-[protein] + ADP + H(+)</text>
        <dbReference type="Rhea" id="RHEA:17989"/>
        <dbReference type="Rhea" id="RHEA-COMP:9863"/>
        <dbReference type="Rhea" id="RHEA-COMP:11604"/>
        <dbReference type="ChEBI" id="CHEBI:15378"/>
        <dbReference type="ChEBI" id="CHEBI:29999"/>
        <dbReference type="ChEBI" id="CHEBI:30616"/>
        <dbReference type="ChEBI" id="CHEBI:83421"/>
        <dbReference type="ChEBI" id="CHEBI:456216"/>
        <dbReference type="EC" id="2.7.11.13"/>
    </reaction>
</comment>
<comment type="catalytic activity">
    <reaction evidence="3">
        <text>L-threonyl-[protein] + ATP = O-phospho-L-threonyl-[protein] + ADP + H(+)</text>
        <dbReference type="Rhea" id="RHEA:46608"/>
        <dbReference type="Rhea" id="RHEA-COMP:11060"/>
        <dbReference type="Rhea" id="RHEA-COMP:11605"/>
        <dbReference type="ChEBI" id="CHEBI:15378"/>
        <dbReference type="ChEBI" id="CHEBI:30013"/>
        <dbReference type="ChEBI" id="CHEBI:30616"/>
        <dbReference type="ChEBI" id="CHEBI:61977"/>
        <dbReference type="ChEBI" id="CHEBI:456216"/>
        <dbReference type="EC" id="2.7.11.13"/>
    </reaction>
</comment>
<comment type="activity regulation">
    <text evidence="1">Atypical PKCs (PRKCI and PRKCZ) exhibit an elevated basal enzymatic activity (that may be due to the interaction with SMG1 or SQSTM1) and are not regulated by diacylglycerol, phosphatidylserine, phorbol esters or calcium ions. Two specific sites, Thr-409 (activation loop of the kinase domain) and Thr-559 (turn motif), need to be phosphorylated for its full activation. Phosphatidylinositol 3,4,5-trisphosphate might be a physiological activator (By similarity).</text>
</comment>
<comment type="subunit">
    <text evidence="2 3">Interacts with PARD6A, PARD6B and PARD6G. Part of a complex with PARD3, PARD6A or PARD6B or PARD6G and CDC42 or RAC1. Interacts with ADAP1/CENTA1. Interacts directly with SQSTM1. Forms a ternary complex with SQSTM1 and KCNAB2. Forms another ternary complex with SQSTM1 and GABRR3. Forms a complex with SQSTM1 and MAP2K5. Interacts (via the protein kinase domain) with WWC1. Forms a tripartite complex with WWC1 and DDR1, but predominantly in the absence of collagen. Component of the Par polarity complex, composed of at least phosphorylated PRKCZ, PARD3 and TIAM1. Interacts with PDPK1 (via N-terminal region). Interacts with WDFY2 (via WD repeats 1-3). Interacts with VAMP2. Forms a complex with WDFY2 and VAMP2. Interacts with APPL1 (By similarity). Interacts with WWC1, WWC2 and WWC3 (By similarity).</text>
</comment>
<comment type="subcellular location">
    <subcellularLocation>
        <location evidence="3">Cytoplasm</location>
    </subcellularLocation>
    <subcellularLocation>
        <location evidence="3">Endosome</location>
    </subcellularLocation>
    <subcellularLocation>
        <location evidence="3">Cell junction</location>
    </subcellularLocation>
    <subcellularLocation>
        <location evidence="2">Membrane</location>
        <topology evidence="9">Peripheral membrane protein</topology>
    </subcellularLocation>
    <text evidence="2 3">In the retina, localizes in the terminals of the rod bipolar cells (By similarity). Associated with endosomes (By similarity). Presence of KRIT1, CDH5 and RAP1B is required for its localization to the cell junction (By similarity). Colocalizes with VAMP2 and WDFY2 in intracellular vesicles (By similarity). Transiently translocates to the membrane of CA1 hippocampal cells in response to the induction of long term potentiation (By similarity).</text>
</comment>
<comment type="domain">
    <text evidence="1">The PB1 domain mediate mutually exclusive interactions with SQSTM1 and PARD6B.</text>
</comment>
<comment type="domain">
    <text>The C1 domain does not bind the diacylglycerol (DAG).</text>
</comment>
<comment type="PTM">
    <text evidence="1">CDH5 is required for its phosphorylation at Thr-409. Phosphorylated by protein kinase PDPK1; phosphorylation is inhibited by the apoptotic C-terminal cleavage product of PKN2. Phosphorylation at Thr-409 by PI3K activates the kinase (By similarity).</text>
</comment>
<comment type="similarity">
    <text evidence="9">Belongs to the protein kinase superfamily. AGC Ser/Thr protein kinase family. PKC subfamily.</text>
</comment>
<gene>
    <name type="primary">PRKCZ</name>
</gene>
<accession>O19111</accession>
<protein>
    <recommendedName>
        <fullName>Protein kinase C zeta type</fullName>
        <ecNumber evidence="3">2.7.11.13</ecNumber>
    </recommendedName>
    <alternativeName>
        <fullName>nPKC-zeta</fullName>
    </alternativeName>
</protein>
<dbReference type="EC" id="2.7.11.13" evidence="3"/>
<dbReference type="EMBL" id="U78768">
    <property type="protein sequence ID" value="AAB67317.1"/>
    <property type="molecule type" value="mRNA"/>
</dbReference>
<dbReference type="RefSeq" id="NP_001076227.1">
    <property type="nucleotide sequence ID" value="NM_001082758.1"/>
</dbReference>
<dbReference type="SMR" id="O19111"/>
<dbReference type="FunCoup" id="O19111">
    <property type="interactions" value="645"/>
</dbReference>
<dbReference type="PaxDb" id="9986-ENSOCUP00000006125"/>
<dbReference type="GeneID" id="100009538"/>
<dbReference type="KEGG" id="ocu:100009538"/>
<dbReference type="CTD" id="5590"/>
<dbReference type="eggNOG" id="KOG0695">
    <property type="taxonomic scope" value="Eukaryota"/>
</dbReference>
<dbReference type="InParanoid" id="O19111"/>
<dbReference type="OrthoDB" id="63267at2759"/>
<dbReference type="BRENDA" id="2.7.11.13">
    <property type="organism ID" value="1749"/>
</dbReference>
<dbReference type="Proteomes" id="UP000001811">
    <property type="component" value="Unplaced"/>
</dbReference>
<dbReference type="GO" id="GO:0005911">
    <property type="term" value="C:cell-cell junction"/>
    <property type="evidence" value="ECO:0000250"/>
    <property type="project" value="UniProtKB"/>
</dbReference>
<dbReference type="GO" id="GO:0005768">
    <property type="term" value="C:endosome"/>
    <property type="evidence" value="ECO:0007669"/>
    <property type="project" value="UniProtKB-SubCell"/>
</dbReference>
<dbReference type="GO" id="GO:0005886">
    <property type="term" value="C:plasma membrane"/>
    <property type="evidence" value="ECO:0000250"/>
    <property type="project" value="UniProtKB"/>
</dbReference>
<dbReference type="GO" id="GO:0005524">
    <property type="term" value="F:ATP binding"/>
    <property type="evidence" value="ECO:0007669"/>
    <property type="project" value="UniProtKB-KW"/>
</dbReference>
<dbReference type="GO" id="GO:0004697">
    <property type="term" value="F:diacylglycerol-dependent serine/threonine kinase activity"/>
    <property type="evidence" value="ECO:0007669"/>
    <property type="project" value="UniProtKB-EC"/>
</dbReference>
<dbReference type="GO" id="GO:0106310">
    <property type="term" value="F:protein serine kinase activity"/>
    <property type="evidence" value="ECO:0007669"/>
    <property type="project" value="RHEA"/>
</dbReference>
<dbReference type="GO" id="GO:0004674">
    <property type="term" value="F:protein serine/threonine kinase activity"/>
    <property type="evidence" value="ECO:0000250"/>
    <property type="project" value="UniProtKB"/>
</dbReference>
<dbReference type="GO" id="GO:0008270">
    <property type="term" value="F:zinc ion binding"/>
    <property type="evidence" value="ECO:0007669"/>
    <property type="project" value="UniProtKB-KW"/>
</dbReference>
<dbReference type="GO" id="GO:0030010">
    <property type="term" value="P:establishment of cell polarity"/>
    <property type="evidence" value="ECO:0000250"/>
    <property type="project" value="UniProtKB"/>
</dbReference>
<dbReference type="GO" id="GO:0006954">
    <property type="term" value="P:inflammatory response"/>
    <property type="evidence" value="ECO:0007669"/>
    <property type="project" value="UniProtKB-KW"/>
</dbReference>
<dbReference type="GO" id="GO:0060291">
    <property type="term" value="P:long-term synaptic potentiation"/>
    <property type="evidence" value="ECO:0000250"/>
    <property type="project" value="UniProtKB"/>
</dbReference>
<dbReference type="GO" id="GO:0070374">
    <property type="term" value="P:positive regulation of ERK1 and ERK2 cascade"/>
    <property type="evidence" value="ECO:0000250"/>
    <property type="project" value="UniProtKB"/>
</dbReference>
<dbReference type="GO" id="GO:2000463">
    <property type="term" value="P:positive regulation of excitatory postsynaptic potential"/>
    <property type="evidence" value="ECO:0000250"/>
    <property type="project" value="UniProtKB"/>
</dbReference>
<dbReference type="GO" id="GO:0046628">
    <property type="term" value="P:positive regulation of insulin receptor signaling pathway"/>
    <property type="evidence" value="ECO:0000250"/>
    <property type="project" value="UniProtKB"/>
</dbReference>
<dbReference type="GO" id="GO:0032733">
    <property type="term" value="P:positive regulation of interleukin-10 production"/>
    <property type="evidence" value="ECO:0000250"/>
    <property type="project" value="UniProtKB"/>
</dbReference>
<dbReference type="GO" id="GO:0032736">
    <property type="term" value="P:positive regulation of interleukin-13 production"/>
    <property type="evidence" value="ECO:0000250"/>
    <property type="project" value="UniProtKB"/>
</dbReference>
<dbReference type="GO" id="GO:0032753">
    <property type="term" value="P:positive regulation of interleukin-4 production"/>
    <property type="evidence" value="ECO:0000250"/>
    <property type="project" value="UniProtKB"/>
</dbReference>
<dbReference type="GO" id="GO:0032754">
    <property type="term" value="P:positive regulation of interleukin-5 production"/>
    <property type="evidence" value="ECO:0000250"/>
    <property type="project" value="UniProtKB"/>
</dbReference>
<dbReference type="GO" id="GO:0051092">
    <property type="term" value="P:positive regulation of NF-kappaB transcription factor activity"/>
    <property type="evidence" value="ECO:0000250"/>
    <property type="project" value="UniProtKB"/>
</dbReference>
<dbReference type="GO" id="GO:2000553">
    <property type="term" value="P:positive regulation of T-helper 2 cell cytokine production"/>
    <property type="evidence" value="ECO:0000250"/>
    <property type="project" value="UniProtKB"/>
</dbReference>
<dbReference type="GO" id="GO:0045630">
    <property type="term" value="P:positive regulation of T-helper 2 cell differentiation"/>
    <property type="evidence" value="ECO:0000250"/>
    <property type="project" value="UniProtKB"/>
</dbReference>
<dbReference type="CDD" id="cd21095">
    <property type="entry name" value="C1_aPKC_zeta"/>
    <property type="match status" value="1"/>
</dbReference>
<dbReference type="CDD" id="cd06404">
    <property type="entry name" value="PB1_aPKC"/>
    <property type="match status" value="1"/>
</dbReference>
<dbReference type="FunFam" id="1.10.510.10:FF:000048">
    <property type="entry name" value="Protein kinase C"/>
    <property type="match status" value="1"/>
</dbReference>
<dbReference type="FunFam" id="3.10.20.90:FF:000071">
    <property type="entry name" value="Protein kinase C"/>
    <property type="match status" value="1"/>
</dbReference>
<dbReference type="FunFam" id="3.30.200.20:FF:000070">
    <property type="entry name" value="Protein kinase C"/>
    <property type="match status" value="1"/>
</dbReference>
<dbReference type="FunFam" id="3.30.60.20:FF:000012">
    <property type="entry name" value="Protein kinase C"/>
    <property type="match status" value="1"/>
</dbReference>
<dbReference type="Gene3D" id="3.30.60.20">
    <property type="match status" value="1"/>
</dbReference>
<dbReference type="Gene3D" id="3.10.20.90">
    <property type="entry name" value="Phosphatidylinositol 3-kinase Catalytic Subunit, Chain A, domain 1"/>
    <property type="match status" value="1"/>
</dbReference>
<dbReference type="Gene3D" id="3.30.200.20">
    <property type="entry name" value="Phosphorylase Kinase, domain 1"/>
    <property type="match status" value="1"/>
</dbReference>
<dbReference type="Gene3D" id="1.10.510.10">
    <property type="entry name" value="Transferase(Phosphotransferase) domain 1"/>
    <property type="match status" value="1"/>
</dbReference>
<dbReference type="InterPro" id="IPR000961">
    <property type="entry name" value="AGC-kinase_C"/>
</dbReference>
<dbReference type="InterPro" id="IPR046349">
    <property type="entry name" value="C1-like_sf"/>
</dbReference>
<dbReference type="InterPro" id="IPR047314">
    <property type="entry name" value="C1_aPKC_zeta"/>
</dbReference>
<dbReference type="InterPro" id="IPR020454">
    <property type="entry name" value="DAG/PE-bd"/>
</dbReference>
<dbReference type="InterPro" id="IPR011009">
    <property type="entry name" value="Kinase-like_dom_sf"/>
</dbReference>
<dbReference type="InterPro" id="IPR053793">
    <property type="entry name" value="PB1-like"/>
</dbReference>
<dbReference type="InterPro" id="IPR034877">
    <property type="entry name" value="PB1_aPKC"/>
</dbReference>
<dbReference type="InterPro" id="IPR000270">
    <property type="entry name" value="PB1_dom"/>
</dbReference>
<dbReference type="InterPro" id="IPR002219">
    <property type="entry name" value="PE/DAG-bd"/>
</dbReference>
<dbReference type="InterPro" id="IPR012233">
    <property type="entry name" value="PKC"/>
</dbReference>
<dbReference type="InterPro" id="IPR017892">
    <property type="entry name" value="Pkinase_C"/>
</dbReference>
<dbReference type="InterPro" id="IPR000719">
    <property type="entry name" value="Prot_kinase_dom"/>
</dbReference>
<dbReference type="InterPro" id="IPR017441">
    <property type="entry name" value="Protein_kinase_ATP_BS"/>
</dbReference>
<dbReference type="InterPro" id="IPR008271">
    <property type="entry name" value="Ser/Thr_kinase_AS"/>
</dbReference>
<dbReference type="PANTHER" id="PTHR24351">
    <property type="entry name" value="RIBOSOMAL PROTEIN S6 KINASE"/>
    <property type="match status" value="1"/>
</dbReference>
<dbReference type="Pfam" id="PF00130">
    <property type="entry name" value="C1_1"/>
    <property type="match status" value="1"/>
</dbReference>
<dbReference type="Pfam" id="PF00564">
    <property type="entry name" value="PB1"/>
    <property type="match status" value="1"/>
</dbReference>
<dbReference type="Pfam" id="PF00069">
    <property type="entry name" value="Pkinase"/>
    <property type="match status" value="1"/>
</dbReference>
<dbReference type="Pfam" id="PF00433">
    <property type="entry name" value="Pkinase_C"/>
    <property type="match status" value="1"/>
</dbReference>
<dbReference type="PIRSF" id="PIRSF000554">
    <property type="entry name" value="PKC_zeta"/>
    <property type="match status" value="1"/>
</dbReference>
<dbReference type="PRINTS" id="PR00008">
    <property type="entry name" value="DAGPEDOMAIN"/>
</dbReference>
<dbReference type="SMART" id="SM00109">
    <property type="entry name" value="C1"/>
    <property type="match status" value="1"/>
</dbReference>
<dbReference type="SMART" id="SM00666">
    <property type="entry name" value="PB1"/>
    <property type="match status" value="1"/>
</dbReference>
<dbReference type="SMART" id="SM00133">
    <property type="entry name" value="S_TK_X"/>
    <property type="match status" value="1"/>
</dbReference>
<dbReference type="SMART" id="SM00220">
    <property type="entry name" value="S_TKc"/>
    <property type="match status" value="1"/>
</dbReference>
<dbReference type="SUPFAM" id="SSF54277">
    <property type="entry name" value="CAD &amp; PB1 domains"/>
    <property type="match status" value="1"/>
</dbReference>
<dbReference type="SUPFAM" id="SSF57889">
    <property type="entry name" value="Cysteine-rich domain"/>
    <property type="match status" value="1"/>
</dbReference>
<dbReference type="SUPFAM" id="SSF56112">
    <property type="entry name" value="Protein kinase-like (PK-like)"/>
    <property type="match status" value="1"/>
</dbReference>
<dbReference type="PROSITE" id="PS51285">
    <property type="entry name" value="AGC_KINASE_CTER"/>
    <property type="match status" value="1"/>
</dbReference>
<dbReference type="PROSITE" id="PS51745">
    <property type="entry name" value="PB1"/>
    <property type="match status" value="1"/>
</dbReference>
<dbReference type="PROSITE" id="PS00107">
    <property type="entry name" value="PROTEIN_KINASE_ATP"/>
    <property type="match status" value="1"/>
</dbReference>
<dbReference type="PROSITE" id="PS50011">
    <property type="entry name" value="PROTEIN_KINASE_DOM"/>
    <property type="match status" value="1"/>
</dbReference>
<dbReference type="PROSITE" id="PS00108">
    <property type="entry name" value="PROTEIN_KINASE_ST"/>
    <property type="match status" value="1"/>
</dbReference>
<dbReference type="PROSITE" id="PS00479">
    <property type="entry name" value="ZF_DAG_PE_1"/>
    <property type="match status" value="1"/>
</dbReference>
<dbReference type="PROSITE" id="PS50081">
    <property type="entry name" value="ZF_DAG_PE_2"/>
    <property type="match status" value="1"/>
</dbReference>
<feature type="chain" id="PRO_0000055703" description="Protein kinase C zeta type">
    <location>
        <begin position="1"/>
        <end position="591"/>
    </location>
</feature>
<feature type="domain" description="PB1" evidence="7">
    <location>
        <begin position="15"/>
        <end position="98"/>
    </location>
</feature>
<feature type="domain" description="Protein kinase" evidence="4">
    <location>
        <begin position="251"/>
        <end position="517"/>
    </location>
</feature>
<feature type="domain" description="AGC-kinase C-terminal" evidence="6">
    <location>
        <begin position="518"/>
        <end position="589"/>
    </location>
</feature>
<feature type="zinc finger region" description="Phorbol-ester/DAG-type" evidence="5">
    <location>
        <begin position="130"/>
        <end position="180"/>
    </location>
</feature>
<feature type="region of interest" description="Interaction with SQSTM1" evidence="1">
    <location>
        <begin position="79"/>
        <end position="145"/>
    </location>
</feature>
<feature type="active site" description="Proton acceptor" evidence="4 8">
    <location>
        <position position="375"/>
    </location>
</feature>
<feature type="binding site" evidence="4">
    <location>
        <begin position="257"/>
        <end position="265"/>
    </location>
    <ligand>
        <name>ATP</name>
        <dbReference type="ChEBI" id="CHEBI:30616"/>
    </ligand>
</feature>
<feature type="binding site" evidence="4">
    <location>
        <position position="280"/>
    </location>
    <ligand>
        <name>ATP</name>
        <dbReference type="ChEBI" id="CHEBI:30616"/>
    </ligand>
</feature>
<feature type="modified residue" description="Phosphothreonine; by PDPK1 and PI3K" evidence="3">
    <location>
        <position position="409"/>
    </location>
</feature>
<feature type="modified residue" description="Phosphothreonine" evidence="3">
    <location>
        <position position="559"/>
    </location>
</feature>
<feature type="modified residue" description="Phosphoserine" evidence="2">
    <location>
        <position position="590"/>
    </location>
</feature>
<organism>
    <name type="scientific">Oryctolagus cuniculus</name>
    <name type="common">Rabbit</name>
    <dbReference type="NCBI Taxonomy" id="9986"/>
    <lineage>
        <taxon>Eukaryota</taxon>
        <taxon>Metazoa</taxon>
        <taxon>Chordata</taxon>
        <taxon>Craniata</taxon>
        <taxon>Vertebrata</taxon>
        <taxon>Euteleostomi</taxon>
        <taxon>Mammalia</taxon>
        <taxon>Eutheria</taxon>
        <taxon>Euarchontoglires</taxon>
        <taxon>Glires</taxon>
        <taxon>Lagomorpha</taxon>
        <taxon>Leporidae</taxon>
        <taxon>Oryctolagus</taxon>
    </lineage>
</organism>